<name>CYB_CHISL</name>
<sequence length="134" mass="15030">MTNIRKTHPLLKIINSSFVDLPAPSSLSSWWNFGSLLGVCLAVQILTGLFLAMHYTSDTATAFNSVTHICRDVNYGWLLRYLHANGASMFFICLYLHVGRGLYYGSYTYSETWNIGILLLFAVMATAFMGYVLP</sequence>
<protein>
    <recommendedName>
        <fullName>Cytochrome b</fullName>
    </recommendedName>
    <alternativeName>
        <fullName>Complex III subunit 3</fullName>
    </alternativeName>
    <alternativeName>
        <fullName>Complex III subunit III</fullName>
    </alternativeName>
    <alternativeName>
        <fullName>Cytochrome b-c1 complex subunit 3</fullName>
    </alternativeName>
    <alternativeName>
        <fullName>Ubiquinol-cytochrome-c reductase complex cytochrome b subunit</fullName>
    </alternativeName>
</protein>
<comment type="function">
    <text evidence="2">Component of the ubiquinol-cytochrome c reductase complex (complex III or cytochrome b-c1 complex) that is part of the mitochondrial respiratory chain. The b-c1 complex mediates electron transfer from ubiquinol to cytochrome c. Contributes to the generation of a proton gradient across the mitochondrial membrane that is then used for ATP synthesis.</text>
</comment>
<comment type="cofactor">
    <cofactor evidence="2">
        <name>heme b</name>
        <dbReference type="ChEBI" id="CHEBI:60344"/>
    </cofactor>
    <text evidence="2">Binds 2 heme b groups non-covalently.</text>
</comment>
<comment type="subunit">
    <text evidence="2">The cytochrome bc1 complex contains 11 subunits: 3 respiratory subunits (MT-CYB, CYC1 and UQCRFS1), 2 core proteins (UQCRC1 and UQCRC2) and 6 low-molecular weight proteins (UQCRH/QCR6, UQCRB/QCR7, UQCRQ/QCR8, UQCR10/QCR9, UQCR11/QCR10 and a cleavage product of UQCRFS1). This cytochrome bc1 complex then forms a dimer.</text>
</comment>
<comment type="subcellular location">
    <subcellularLocation>
        <location evidence="2">Mitochondrion inner membrane</location>
        <topology evidence="2">Multi-pass membrane protein</topology>
    </subcellularLocation>
</comment>
<comment type="miscellaneous">
    <text evidence="1">Heme 1 (or BL or b562) is low-potential and absorbs at about 562 nm, and heme 2 (or BH or b566) is high-potential and absorbs at about 566 nm.</text>
</comment>
<comment type="similarity">
    <text evidence="3">Belongs to the cytochrome b family.</text>
</comment>
<comment type="caution">
    <text evidence="2">The full-length protein contains only eight transmembrane helices, not nine as predicted by bioinformatics tools.</text>
</comment>
<proteinExistence type="inferred from homology"/>
<gene>
    <name type="primary">MT-CYB</name>
    <name type="synonym">COB</name>
    <name type="synonym">CYTB</name>
    <name type="synonym">MTCYB</name>
</gene>
<dbReference type="EMBL" id="L19507">
    <property type="protein sequence ID" value="AAA31675.1"/>
    <property type="molecule type" value="Genomic_DNA"/>
</dbReference>
<dbReference type="EMBL" id="L28939">
    <property type="protein sequence ID" value="AAA30821.1"/>
    <property type="molecule type" value="Genomic_DNA"/>
</dbReference>
<dbReference type="PIR" id="I46090">
    <property type="entry name" value="I46090"/>
</dbReference>
<dbReference type="SMR" id="Q34254"/>
<dbReference type="GO" id="GO:0005743">
    <property type="term" value="C:mitochondrial inner membrane"/>
    <property type="evidence" value="ECO:0007669"/>
    <property type="project" value="UniProtKB-SubCell"/>
</dbReference>
<dbReference type="GO" id="GO:0046872">
    <property type="term" value="F:metal ion binding"/>
    <property type="evidence" value="ECO:0007669"/>
    <property type="project" value="UniProtKB-KW"/>
</dbReference>
<dbReference type="GO" id="GO:0008121">
    <property type="term" value="F:ubiquinol-cytochrome-c reductase activity"/>
    <property type="evidence" value="ECO:0007669"/>
    <property type="project" value="TreeGrafter"/>
</dbReference>
<dbReference type="GO" id="GO:0006122">
    <property type="term" value="P:mitochondrial electron transport, ubiquinol to cytochrome c"/>
    <property type="evidence" value="ECO:0007669"/>
    <property type="project" value="TreeGrafter"/>
</dbReference>
<dbReference type="CDD" id="cd00284">
    <property type="entry name" value="Cytochrome_b_N"/>
    <property type="match status" value="1"/>
</dbReference>
<dbReference type="Gene3D" id="1.20.810.10">
    <property type="entry name" value="Cytochrome Bc1 Complex, Chain C"/>
    <property type="match status" value="1"/>
</dbReference>
<dbReference type="InterPro" id="IPR005797">
    <property type="entry name" value="Cyt_b/b6_N"/>
</dbReference>
<dbReference type="InterPro" id="IPR027387">
    <property type="entry name" value="Cytb/b6-like_sf"/>
</dbReference>
<dbReference type="InterPro" id="IPR048259">
    <property type="entry name" value="Cytochrome_b_N_euk/bac"/>
</dbReference>
<dbReference type="InterPro" id="IPR016174">
    <property type="entry name" value="Di-haem_cyt_TM"/>
</dbReference>
<dbReference type="PANTHER" id="PTHR19271">
    <property type="entry name" value="CYTOCHROME B"/>
    <property type="match status" value="1"/>
</dbReference>
<dbReference type="PANTHER" id="PTHR19271:SF16">
    <property type="entry name" value="CYTOCHROME B"/>
    <property type="match status" value="1"/>
</dbReference>
<dbReference type="Pfam" id="PF00033">
    <property type="entry name" value="Cytochrome_B"/>
    <property type="match status" value="1"/>
</dbReference>
<dbReference type="SUPFAM" id="SSF81342">
    <property type="entry name" value="Transmembrane di-heme cytochromes"/>
    <property type="match status" value="1"/>
</dbReference>
<dbReference type="PROSITE" id="PS51002">
    <property type="entry name" value="CYTB_NTER"/>
    <property type="match status" value="1"/>
</dbReference>
<accession>Q34254</accession>
<accession>Q28345</accession>
<geneLocation type="mitochondrion"/>
<feature type="chain" id="PRO_0000060779" description="Cytochrome b">
    <location>
        <begin position="1"/>
        <end position="134" status="greater than"/>
    </location>
</feature>
<feature type="transmembrane region" description="Helical" evidence="2">
    <location>
        <begin position="33"/>
        <end position="53"/>
    </location>
</feature>
<feature type="transmembrane region" description="Helical" evidence="2">
    <location>
        <begin position="77"/>
        <end position="98"/>
    </location>
</feature>
<feature type="transmembrane region" description="Helical" evidence="2">
    <location>
        <begin position="113"/>
        <end position="133"/>
    </location>
</feature>
<feature type="binding site" description="axial binding residue" evidence="2">
    <location>
        <position position="83"/>
    </location>
    <ligand>
        <name>heme b</name>
        <dbReference type="ChEBI" id="CHEBI:60344"/>
        <label>b562</label>
    </ligand>
    <ligandPart>
        <name>Fe</name>
        <dbReference type="ChEBI" id="CHEBI:18248"/>
    </ligandPart>
</feature>
<feature type="binding site" description="axial binding residue" evidence="2">
    <location>
        <position position="97"/>
    </location>
    <ligand>
        <name>heme b</name>
        <dbReference type="ChEBI" id="CHEBI:60344"/>
        <label>b566</label>
    </ligand>
    <ligandPart>
        <name>Fe</name>
        <dbReference type="ChEBI" id="CHEBI:18248"/>
    </ligandPart>
</feature>
<feature type="non-terminal residue">
    <location>
        <position position="134"/>
    </location>
</feature>
<evidence type="ECO:0000250" key="1"/>
<evidence type="ECO:0000250" key="2">
    <source>
        <dbReference type="UniProtKB" id="P00157"/>
    </source>
</evidence>
<evidence type="ECO:0000255" key="3">
    <source>
        <dbReference type="PROSITE-ProRule" id="PRU00968"/>
    </source>
</evidence>
<organism>
    <name type="scientific">Chiroderma salvini</name>
    <name type="common">Salvin's big-eyed bat</name>
    <dbReference type="NCBI Taxonomy" id="27646"/>
    <lineage>
        <taxon>Eukaryota</taxon>
        <taxon>Metazoa</taxon>
        <taxon>Chordata</taxon>
        <taxon>Craniata</taxon>
        <taxon>Vertebrata</taxon>
        <taxon>Euteleostomi</taxon>
        <taxon>Mammalia</taxon>
        <taxon>Eutheria</taxon>
        <taxon>Laurasiatheria</taxon>
        <taxon>Chiroptera</taxon>
        <taxon>Yangochiroptera</taxon>
        <taxon>Phyllostomidae</taxon>
        <taxon>Stenodermatinae</taxon>
        <taxon>Chiroderma</taxon>
    </lineage>
</organism>
<reference key="1">
    <citation type="journal article" date="1993" name="Mol. Biol. Evol.">
        <title>Molecular phylogenetics of Stenodermatini bat genera: congruence of data from nuclear and mitochondrial DNA.</title>
        <authorList>
            <person name="den Bussche R.A."/>
            <person name="Baker R.J."/>
            <person name="Wichman H.A."/>
            <person name="Hamilton M.J."/>
        </authorList>
    </citation>
    <scope>NUCLEOTIDE SEQUENCE [GENOMIC DNA]</scope>
    <source>
        <strain>Isolate TK 22581</strain>
        <tissue>Muscle</tissue>
    </source>
</reference>
<reference key="2">
    <citation type="journal article" date="1994" name="J. Mammal.">
        <title>Systematic relationships within Chiroderma (Chiroptera: Phyllostomidae) based on cytochrome b sequence variation.</title>
        <authorList>
            <person name="Baker R.J."/>
            <person name="Taddei V.A."/>
            <person name="Hudgeons J.L."/>
            <person name="den Bussche R.A."/>
        </authorList>
    </citation>
    <scope>NUCLEOTIDE SEQUENCE [GENOMIC DNA] OF 1-29</scope>
    <source>
        <strain>Isolate TK 22581</strain>
        <tissue>Liver</tissue>
    </source>
</reference>
<keyword id="KW-0249">Electron transport</keyword>
<keyword id="KW-0349">Heme</keyword>
<keyword id="KW-0408">Iron</keyword>
<keyword id="KW-0472">Membrane</keyword>
<keyword id="KW-0479">Metal-binding</keyword>
<keyword id="KW-0496">Mitochondrion</keyword>
<keyword id="KW-0999">Mitochondrion inner membrane</keyword>
<keyword id="KW-0679">Respiratory chain</keyword>
<keyword id="KW-0812">Transmembrane</keyword>
<keyword id="KW-1133">Transmembrane helix</keyword>
<keyword id="KW-0813">Transport</keyword>
<keyword id="KW-0830">Ubiquinone</keyword>